<feature type="chain" id="PRO_1000052600" description="Large ribosomal subunit protein uL22">
    <location>
        <begin position="1"/>
        <end position="118"/>
    </location>
</feature>
<accession>A0ALW3</accession>
<dbReference type="EMBL" id="AM263198">
    <property type="protein sequence ID" value="CAK21995.1"/>
    <property type="molecule type" value="Genomic_DNA"/>
</dbReference>
<dbReference type="RefSeq" id="WP_003727697.1">
    <property type="nucleotide sequence ID" value="NC_008555.1"/>
</dbReference>
<dbReference type="SMR" id="A0ALW3"/>
<dbReference type="STRING" id="386043.lwe2577"/>
<dbReference type="GeneID" id="93240508"/>
<dbReference type="KEGG" id="lwe:lwe2577"/>
<dbReference type="eggNOG" id="COG0091">
    <property type="taxonomic scope" value="Bacteria"/>
</dbReference>
<dbReference type="HOGENOM" id="CLU_083987_3_3_9"/>
<dbReference type="OrthoDB" id="9805969at2"/>
<dbReference type="Proteomes" id="UP000000779">
    <property type="component" value="Chromosome"/>
</dbReference>
<dbReference type="GO" id="GO:0022625">
    <property type="term" value="C:cytosolic large ribosomal subunit"/>
    <property type="evidence" value="ECO:0007669"/>
    <property type="project" value="TreeGrafter"/>
</dbReference>
<dbReference type="GO" id="GO:0019843">
    <property type="term" value="F:rRNA binding"/>
    <property type="evidence" value="ECO:0007669"/>
    <property type="project" value="UniProtKB-UniRule"/>
</dbReference>
<dbReference type="GO" id="GO:0003735">
    <property type="term" value="F:structural constituent of ribosome"/>
    <property type="evidence" value="ECO:0007669"/>
    <property type="project" value="InterPro"/>
</dbReference>
<dbReference type="GO" id="GO:0006412">
    <property type="term" value="P:translation"/>
    <property type="evidence" value="ECO:0007669"/>
    <property type="project" value="UniProtKB-UniRule"/>
</dbReference>
<dbReference type="CDD" id="cd00336">
    <property type="entry name" value="Ribosomal_L22"/>
    <property type="match status" value="1"/>
</dbReference>
<dbReference type="FunFam" id="3.90.470.10:FF:000001">
    <property type="entry name" value="50S ribosomal protein L22"/>
    <property type="match status" value="1"/>
</dbReference>
<dbReference type="Gene3D" id="3.90.470.10">
    <property type="entry name" value="Ribosomal protein L22/L17"/>
    <property type="match status" value="1"/>
</dbReference>
<dbReference type="HAMAP" id="MF_01331_B">
    <property type="entry name" value="Ribosomal_uL22_B"/>
    <property type="match status" value="1"/>
</dbReference>
<dbReference type="InterPro" id="IPR001063">
    <property type="entry name" value="Ribosomal_uL22"/>
</dbReference>
<dbReference type="InterPro" id="IPR005727">
    <property type="entry name" value="Ribosomal_uL22_bac/chlpt-type"/>
</dbReference>
<dbReference type="InterPro" id="IPR047867">
    <property type="entry name" value="Ribosomal_uL22_bac/org-type"/>
</dbReference>
<dbReference type="InterPro" id="IPR018260">
    <property type="entry name" value="Ribosomal_uL22_CS"/>
</dbReference>
<dbReference type="InterPro" id="IPR036394">
    <property type="entry name" value="Ribosomal_uL22_sf"/>
</dbReference>
<dbReference type="NCBIfam" id="TIGR01044">
    <property type="entry name" value="rplV_bact"/>
    <property type="match status" value="1"/>
</dbReference>
<dbReference type="PANTHER" id="PTHR13501">
    <property type="entry name" value="CHLOROPLAST 50S RIBOSOMAL PROTEIN L22-RELATED"/>
    <property type="match status" value="1"/>
</dbReference>
<dbReference type="PANTHER" id="PTHR13501:SF8">
    <property type="entry name" value="LARGE RIBOSOMAL SUBUNIT PROTEIN UL22M"/>
    <property type="match status" value="1"/>
</dbReference>
<dbReference type="Pfam" id="PF00237">
    <property type="entry name" value="Ribosomal_L22"/>
    <property type="match status" value="1"/>
</dbReference>
<dbReference type="SUPFAM" id="SSF54843">
    <property type="entry name" value="Ribosomal protein L22"/>
    <property type="match status" value="1"/>
</dbReference>
<dbReference type="PROSITE" id="PS00464">
    <property type="entry name" value="RIBOSOMAL_L22"/>
    <property type="match status" value="1"/>
</dbReference>
<gene>
    <name evidence="1" type="primary">rplV</name>
    <name type="ordered locus">lwe2577</name>
</gene>
<sequence length="118" mass="12874">MASEVTSAKAVAKTVRIAPRKARIVIDLIRGKQVGEAIAILKYTPRSASPIIEKVLKSAIANAEHNYDLDINNLVVEEAFVDEGPTLKRFRPRAQGRASAINKRTSHITVVVSEVKEG</sequence>
<organism>
    <name type="scientific">Listeria welshimeri serovar 6b (strain ATCC 35897 / DSM 20650 / CCUG 15529 / CIP 8149 / NCTC 11857 / SLCC 5334 / V8)</name>
    <dbReference type="NCBI Taxonomy" id="386043"/>
    <lineage>
        <taxon>Bacteria</taxon>
        <taxon>Bacillati</taxon>
        <taxon>Bacillota</taxon>
        <taxon>Bacilli</taxon>
        <taxon>Bacillales</taxon>
        <taxon>Listeriaceae</taxon>
        <taxon>Listeria</taxon>
    </lineage>
</organism>
<protein>
    <recommendedName>
        <fullName evidence="1">Large ribosomal subunit protein uL22</fullName>
    </recommendedName>
    <alternativeName>
        <fullName evidence="2">50S ribosomal protein L22</fullName>
    </alternativeName>
</protein>
<name>RL22_LISW6</name>
<reference key="1">
    <citation type="journal article" date="2006" name="J. Bacteriol.">
        <title>Whole-genome sequence of Listeria welshimeri reveals common steps in genome reduction with Listeria innocua as compared to Listeria monocytogenes.</title>
        <authorList>
            <person name="Hain T."/>
            <person name="Steinweg C."/>
            <person name="Kuenne C.T."/>
            <person name="Billion A."/>
            <person name="Ghai R."/>
            <person name="Chatterjee S.S."/>
            <person name="Domann E."/>
            <person name="Kaerst U."/>
            <person name="Goesmann A."/>
            <person name="Bekel T."/>
            <person name="Bartels D."/>
            <person name="Kaiser O."/>
            <person name="Meyer F."/>
            <person name="Puehler A."/>
            <person name="Weisshaar B."/>
            <person name="Wehland J."/>
            <person name="Liang C."/>
            <person name="Dandekar T."/>
            <person name="Lampidis R."/>
            <person name="Kreft J."/>
            <person name="Goebel W."/>
            <person name="Chakraborty T."/>
        </authorList>
    </citation>
    <scope>NUCLEOTIDE SEQUENCE [LARGE SCALE GENOMIC DNA]</scope>
    <source>
        <strain>ATCC 35897 / DSM 20650 / CCUG 15529 / CIP 8149 / NCTC 11857 / SLCC 5334 / V8</strain>
    </source>
</reference>
<proteinExistence type="inferred from homology"/>
<evidence type="ECO:0000255" key="1">
    <source>
        <dbReference type="HAMAP-Rule" id="MF_01331"/>
    </source>
</evidence>
<evidence type="ECO:0000305" key="2"/>
<comment type="function">
    <text evidence="1">This protein binds specifically to 23S rRNA; its binding is stimulated by other ribosomal proteins, e.g. L4, L17, and L20. It is important during the early stages of 50S assembly. It makes multiple contacts with different domains of the 23S rRNA in the assembled 50S subunit and ribosome (By similarity).</text>
</comment>
<comment type="function">
    <text evidence="1">The globular domain of the protein is located near the polypeptide exit tunnel on the outside of the subunit, while an extended beta-hairpin is found that lines the wall of the exit tunnel in the center of the 70S ribosome.</text>
</comment>
<comment type="subunit">
    <text evidence="1">Part of the 50S ribosomal subunit.</text>
</comment>
<comment type="similarity">
    <text evidence="1">Belongs to the universal ribosomal protein uL22 family.</text>
</comment>
<keyword id="KW-0687">Ribonucleoprotein</keyword>
<keyword id="KW-0689">Ribosomal protein</keyword>
<keyword id="KW-0694">RNA-binding</keyword>
<keyword id="KW-0699">rRNA-binding</keyword>